<organism>
    <name type="scientific">Bacillus velezensis (strain DSM 23117 / BGSC 10A6 / LMG 26770 / FZB42)</name>
    <name type="common">Bacillus amyloliquefaciens subsp. plantarum</name>
    <dbReference type="NCBI Taxonomy" id="326423"/>
    <lineage>
        <taxon>Bacteria</taxon>
        <taxon>Bacillati</taxon>
        <taxon>Bacillota</taxon>
        <taxon>Bacilli</taxon>
        <taxon>Bacillales</taxon>
        <taxon>Bacillaceae</taxon>
        <taxon>Bacillus</taxon>
        <taxon>Bacillus amyloliquefaciens group</taxon>
    </lineage>
</organism>
<dbReference type="EMBL" id="CP000560">
    <property type="protein sequence ID" value="ABS74497.1"/>
    <property type="molecule type" value="Genomic_DNA"/>
</dbReference>
<dbReference type="RefSeq" id="WP_007409427.1">
    <property type="nucleotide sequence ID" value="NC_009725.2"/>
</dbReference>
<dbReference type="SMR" id="A7Z671"/>
<dbReference type="GeneID" id="93081271"/>
<dbReference type="KEGG" id="bay:RBAM_021360"/>
<dbReference type="HOGENOM" id="CLU_038686_3_1_9"/>
<dbReference type="Proteomes" id="UP000001120">
    <property type="component" value="Chromosome"/>
</dbReference>
<dbReference type="GO" id="GO:0005737">
    <property type="term" value="C:cytoplasm"/>
    <property type="evidence" value="ECO:0007669"/>
    <property type="project" value="UniProtKB-SubCell"/>
</dbReference>
<dbReference type="GO" id="GO:0051301">
    <property type="term" value="P:cell division"/>
    <property type="evidence" value="ECO:0007669"/>
    <property type="project" value="UniProtKB-KW"/>
</dbReference>
<dbReference type="GO" id="GO:0007059">
    <property type="term" value="P:chromosome segregation"/>
    <property type="evidence" value="ECO:0007669"/>
    <property type="project" value="UniProtKB-UniRule"/>
</dbReference>
<dbReference type="GO" id="GO:0006260">
    <property type="term" value="P:DNA replication"/>
    <property type="evidence" value="ECO:0007669"/>
    <property type="project" value="UniProtKB-UniRule"/>
</dbReference>
<dbReference type="Gene3D" id="6.10.250.2410">
    <property type="match status" value="1"/>
</dbReference>
<dbReference type="Gene3D" id="1.10.10.580">
    <property type="entry name" value="Structural maintenance of chromosome 1. Chain E"/>
    <property type="match status" value="1"/>
</dbReference>
<dbReference type="HAMAP" id="MF_01805">
    <property type="entry name" value="ScpA"/>
    <property type="match status" value="1"/>
</dbReference>
<dbReference type="InterPro" id="IPR003768">
    <property type="entry name" value="ScpA"/>
</dbReference>
<dbReference type="InterPro" id="IPR023093">
    <property type="entry name" value="ScpA-like_C"/>
</dbReference>
<dbReference type="NCBIfam" id="NF000994">
    <property type="entry name" value="PRK00104.1-3"/>
    <property type="match status" value="1"/>
</dbReference>
<dbReference type="NCBIfam" id="NF000995">
    <property type="entry name" value="PRK00104.1-4"/>
    <property type="match status" value="1"/>
</dbReference>
<dbReference type="PANTHER" id="PTHR33969">
    <property type="entry name" value="SEGREGATION AND CONDENSATION PROTEIN A"/>
    <property type="match status" value="1"/>
</dbReference>
<dbReference type="PANTHER" id="PTHR33969:SF2">
    <property type="entry name" value="SEGREGATION AND CONDENSATION PROTEIN A"/>
    <property type="match status" value="1"/>
</dbReference>
<dbReference type="Pfam" id="PF02616">
    <property type="entry name" value="SMC_ScpA"/>
    <property type="match status" value="1"/>
</dbReference>
<protein>
    <recommendedName>
        <fullName evidence="1">Segregation and condensation protein A</fullName>
    </recommendedName>
</protein>
<name>SCPA_BACVZ</name>
<evidence type="ECO:0000255" key="1">
    <source>
        <dbReference type="HAMAP-Rule" id="MF_01805"/>
    </source>
</evidence>
<keyword id="KW-0131">Cell cycle</keyword>
<keyword id="KW-0132">Cell division</keyword>
<keyword id="KW-0159">Chromosome partition</keyword>
<keyword id="KW-0963">Cytoplasm</keyword>
<proteinExistence type="inferred from homology"/>
<comment type="function">
    <text evidence="1">Participates in chromosomal partition during cell division. May act via the formation of a condensin-like complex containing Smc and ScpB that pull DNA away from mid-cell into both cell halves.</text>
</comment>
<comment type="subunit">
    <text evidence="1">Component of a cohesin-like complex composed of ScpA, ScpB and the Smc homodimer, in which ScpA and ScpB bind to the head domain of Smc. The presence of the three proteins is required for the association of the complex with DNA.</text>
</comment>
<comment type="subcellular location">
    <subcellularLocation>
        <location evidence="1">Cytoplasm</location>
    </subcellularLocation>
    <text evidence="1">Associated with two foci at the outer edges of the nucleoid region in young cells, and at four foci within both cell halves in older cells.</text>
</comment>
<comment type="similarity">
    <text evidence="1">Belongs to the ScpA family.</text>
</comment>
<sequence length="251" mass="29520">MVEYQVKIDTFEGPLDLLLHLINRLEIDIYDIPVATITEQYLLYVHTMQELELDVASEYLVMAATLLSIKSRMLLPKQEEELFEDEMLEEEDPRDELIEKLIEYRKYKTAAKDLKEREEERQKSFTKPPSDLSEYAKEIKQTEQKLSVTVYDMIGAFQKVLQRKKITRPKETTITRQEIPIEDRMNEIVKSLKTAGRRINFTELFPSRQKDHLVVTFLAVLELMKNQQIIIEQEENFSDIYITGSESIHGA</sequence>
<feature type="chain" id="PRO_1000069965" description="Segregation and condensation protein A">
    <location>
        <begin position="1"/>
        <end position="251"/>
    </location>
</feature>
<reference key="1">
    <citation type="journal article" date="2007" name="Nat. Biotechnol.">
        <title>Comparative analysis of the complete genome sequence of the plant growth-promoting bacterium Bacillus amyloliquefaciens FZB42.</title>
        <authorList>
            <person name="Chen X.H."/>
            <person name="Koumoutsi A."/>
            <person name="Scholz R."/>
            <person name="Eisenreich A."/>
            <person name="Schneider K."/>
            <person name="Heinemeyer I."/>
            <person name="Morgenstern B."/>
            <person name="Voss B."/>
            <person name="Hess W.R."/>
            <person name="Reva O."/>
            <person name="Junge H."/>
            <person name="Voigt B."/>
            <person name="Jungblut P.R."/>
            <person name="Vater J."/>
            <person name="Suessmuth R."/>
            <person name="Liesegang H."/>
            <person name="Strittmatter A."/>
            <person name="Gottschalk G."/>
            <person name="Borriss R."/>
        </authorList>
    </citation>
    <scope>NUCLEOTIDE SEQUENCE [LARGE SCALE GENOMIC DNA]</scope>
    <source>
        <strain>DSM 23117 / BGSC 10A6 / LMG 26770 / FZB42</strain>
    </source>
</reference>
<accession>A7Z671</accession>
<gene>
    <name evidence="1" type="primary">scpA</name>
    <name type="ordered locus">RBAM_021360</name>
</gene>